<name>OSTCN_RABIT</name>
<accession>P39056</accession>
<dbReference type="PIR" id="A61280">
    <property type="entry name" value="A61280"/>
</dbReference>
<dbReference type="SMR" id="P39056"/>
<dbReference type="STRING" id="9986.ENSOCUP00000020318"/>
<dbReference type="PaxDb" id="9986-ENSOCUP00000020318"/>
<dbReference type="eggNOG" id="ENOG502S85I">
    <property type="taxonomic scope" value="Eukaryota"/>
</dbReference>
<dbReference type="InParanoid" id="P39056"/>
<dbReference type="Proteomes" id="UP000001811">
    <property type="component" value="Unplaced"/>
</dbReference>
<dbReference type="GO" id="GO:0005737">
    <property type="term" value="C:cytoplasm"/>
    <property type="evidence" value="ECO:0000250"/>
    <property type="project" value="UniProtKB"/>
</dbReference>
<dbReference type="GO" id="GO:0005576">
    <property type="term" value="C:extracellular region"/>
    <property type="evidence" value="ECO:0007669"/>
    <property type="project" value="UniProtKB-SubCell"/>
</dbReference>
<dbReference type="GO" id="GO:0005509">
    <property type="term" value="F:calcium ion binding"/>
    <property type="evidence" value="ECO:0007669"/>
    <property type="project" value="InterPro"/>
</dbReference>
<dbReference type="GO" id="GO:0005179">
    <property type="term" value="F:hormone activity"/>
    <property type="evidence" value="ECO:0000250"/>
    <property type="project" value="UniProtKB"/>
</dbReference>
<dbReference type="GO" id="GO:0046848">
    <property type="term" value="F:hydroxyapatite binding"/>
    <property type="evidence" value="ECO:0007669"/>
    <property type="project" value="TreeGrafter"/>
</dbReference>
<dbReference type="GO" id="GO:0008147">
    <property type="term" value="F:structural constituent of bone"/>
    <property type="evidence" value="ECO:0000250"/>
    <property type="project" value="UniProtKB"/>
</dbReference>
<dbReference type="GO" id="GO:0031214">
    <property type="term" value="P:biomineral tissue development"/>
    <property type="evidence" value="ECO:0007669"/>
    <property type="project" value="UniProtKB-KW"/>
</dbReference>
<dbReference type="GO" id="GO:0060348">
    <property type="term" value="P:bone development"/>
    <property type="evidence" value="ECO:0007669"/>
    <property type="project" value="InterPro"/>
</dbReference>
<dbReference type="GO" id="GO:0007420">
    <property type="term" value="P:brain development"/>
    <property type="evidence" value="ECO:0000250"/>
    <property type="project" value="UniProtKB"/>
</dbReference>
<dbReference type="GO" id="GO:0032869">
    <property type="term" value="P:cellular response to insulin stimulus"/>
    <property type="evidence" value="ECO:0000250"/>
    <property type="project" value="UniProtKB"/>
</dbReference>
<dbReference type="GO" id="GO:0050890">
    <property type="term" value="P:cognition"/>
    <property type="evidence" value="ECO:0000250"/>
    <property type="project" value="UniProtKB"/>
</dbReference>
<dbReference type="GO" id="GO:0042593">
    <property type="term" value="P:glucose homeostasis"/>
    <property type="evidence" value="ECO:0000250"/>
    <property type="project" value="UniProtKB"/>
</dbReference>
<dbReference type="GO" id="GO:0007611">
    <property type="term" value="P:learning or memory"/>
    <property type="evidence" value="ECO:0000250"/>
    <property type="project" value="UniProtKB"/>
</dbReference>
<dbReference type="GO" id="GO:1903011">
    <property type="term" value="P:negative regulation of bone development"/>
    <property type="evidence" value="ECO:0000250"/>
    <property type="project" value="UniProtKB"/>
</dbReference>
<dbReference type="GO" id="GO:0001649">
    <property type="term" value="P:osteoblast differentiation"/>
    <property type="evidence" value="ECO:0007669"/>
    <property type="project" value="TreeGrafter"/>
</dbReference>
<dbReference type="GO" id="GO:0001956">
    <property type="term" value="P:positive regulation of neurotransmitter secretion"/>
    <property type="evidence" value="ECO:0000250"/>
    <property type="project" value="UniProtKB"/>
</dbReference>
<dbReference type="GO" id="GO:0030500">
    <property type="term" value="P:regulation of bone mineralization"/>
    <property type="evidence" value="ECO:0007669"/>
    <property type="project" value="InterPro"/>
</dbReference>
<dbReference type="GO" id="GO:1900076">
    <property type="term" value="P:regulation of cellular response to insulin stimulus"/>
    <property type="evidence" value="ECO:0007669"/>
    <property type="project" value="InterPro"/>
</dbReference>
<dbReference type="GO" id="GO:2000224">
    <property type="term" value="P:regulation of testosterone biosynthetic process"/>
    <property type="evidence" value="ECO:0000250"/>
    <property type="project" value="UniProtKB"/>
</dbReference>
<dbReference type="GO" id="GO:0032571">
    <property type="term" value="P:response to vitamin K"/>
    <property type="evidence" value="ECO:0007669"/>
    <property type="project" value="InterPro"/>
</dbReference>
<dbReference type="GO" id="GO:0044342">
    <property type="term" value="P:type B pancreatic cell proliferation"/>
    <property type="evidence" value="ECO:0000250"/>
    <property type="project" value="UniProtKB"/>
</dbReference>
<dbReference type="InterPro" id="IPR035972">
    <property type="entry name" value="GLA-like_dom_SF"/>
</dbReference>
<dbReference type="InterPro" id="IPR000294">
    <property type="entry name" value="GLA_domain"/>
</dbReference>
<dbReference type="InterPro" id="IPR039176">
    <property type="entry name" value="Osteocalcin"/>
</dbReference>
<dbReference type="InterPro" id="IPR002384">
    <property type="entry name" value="Osteocalcin/MGP"/>
</dbReference>
<dbReference type="PANTHER" id="PTHR14235">
    <property type="entry name" value="OSTEOCALCIN"/>
    <property type="match status" value="1"/>
</dbReference>
<dbReference type="PANTHER" id="PTHR14235:SF0">
    <property type="entry name" value="OSTEOCALCIN"/>
    <property type="match status" value="1"/>
</dbReference>
<dbReference type="PRINTS" id="PR00002">
    <property type="entry name" value="GLABONE"/>
</dbReference>
<dbReference type="SMART" id="SM00069">
    <property type="entry name" value="GLA"/>
    <property type="match status" value="1"/>
</dbReference>
<dbReference type="SUPFAM" id="SSF57630">
    <property type="entry name" value="GLA-domain"/>
    <property type="match status" value="1"/>
</dbReference>
<dbReference type="PROSITE" id="PS00011">
    <property type="entry name" value="GLA_1"/>
    <property type="match status" value="1"/>
</dbReference>
<dbReference type="PROSITE" id="PS50998">
    <property type="entry name" value="GLA_2"/>
    <property type="match status" value="1"/>
</dbReference>
<organism>
    <name type="scientific">Oryctolagus cuniculus</name>
    <name type="common">Rabbit</name>
    <dbReference type="NCBI Taxonomy" id="9986"/>
    <lineage>
        <taxon>Eukaryota</taxon>
        <taxon>Metazoa</taxon>
        <taxon>Chordata</taxon>
        <taxon>Craniata</taxon>
        <taxon>Vertebrata</taxon>
        <taxon>Euteleostomi</taxon>
        <taxon>Mammalia</taxon>
        <taxon>Eutheria</taxon>
        <taxon>Euarchontoglires</taxon>
        <taxon>Glires</taxon>
        <taxon>Lagomorpha</taxon>
        <taxon>Leporidae</taxon>
        <taxon>Oryctolagus</taxon>
    </lineage>
</organism>
<keyword id="KW-0091">Biomineralization</keyword>
<keyword id="KW-0106">Calcium</keyword>
<keyword id="KW-0903">Direct protein sequencing</keyword>
<keyword id="KW-1015">Disulfide bond</keyword>
<keyword id="KW-0301">Gamma-carboxyglutamic acid</keyword>
<keyword id="KW-0372">Hormone</keyword>
<keyword id="KW-0379">Hydroxylation</keyword>
<keyword id="KW-0479">Metal-binding</keyword>
<keyword id="KW-0873">Pyrrolidone carboxylic acid</keyword>
<keyword id="KW-1185">Reference proteome</keyword>
<keyword id="KW-0964">Secreted</keyword>
<comment type="function">
    <text evidence="5">The carboxylated form is one of the main organic components of the bone matrix, which constitutes 1-2% of the total bone protein: it acts as a negative regulator of bone formation and is required to limit bone formation without impairing bone resorption or mineralization. The carboxylated form binds strongly to apatite and calcium.</text>
</comment>
<comment type="function">
    <text evidence="5">The uncarboxylated form acts as a hormone secreted by osteoblasts, which regulates different cellular processes, such as energy metabolism, male fertility and brain development. Regulates of energy metabolism by acting as a hormone favoring pancreatic beta-cell proliferation, insulin secretion and sensitivity and energy expenditure. Uncarboxylated osteocalcin hormone also promotes testosterone production in the testes: acts as a ligand for G protein-coupled receptor GPRC6A at the surface of Leydig cells, initiating a signaling response that promotes the expression of enzymes required for testosterone synthesis in a CREB-dependent manner. Also acts as a regulator of brain development: osteocalcin hormone crosses the blood-brain barrier and acts as a ligand for GPR158 on neurons, initiating a signaling response that prevents neuronal apoptosis in the hippocampus, favors the synthesis of all monoamine neurotransmitters and inhibits that of gamma-aminobutyric acid (GABA). Osteocalcin also crosses the placenta during pregnancy and maternal osteocalcin is required for fetal brain development.</text>
</comment>
<comment type="subcellular location">
    <subcellularLocation>
        <location evidence="7">Secreted</location>
    </subcellularLocation>
</comment>
<comment type="PTM">
    <text evidence="5 6">Gamma-carboxyglutamate residues are formed by vitamin K dependent carboxylation by GGCX. These residues are essential for the binding of calcium (By similarity). Decarboxylation promotes the hormone activity (By similarity).</text>
</comment>
<comment type="similarity">
    <text evidence="8">Belongs to the osteocalcin/matrix Gla protein family.</text>
</comment>
<sequence length="49" mass="5431">QLINGQGAPAPYPDPLEPKREVCELNPDCDELADQVGLQDAYQRFYGPV</sequence>
<feature type="chain" id="PRO_0000148905" description="Osteocalcin">
    <location>
        <begin position="1"/>
        <end position="49"/>
    </location>
</feature>
<feature type="domain" description="Gla" evidence="6">
    <location>
        <begin position="1"/>
        <end position="47"/>
    </location>
</feature>
<feature type="binding site" evidence="3">
    <location>
        <position position="17"/>
    </location>
    <ligand>
        <name>Ca(2+)</name>
        <dbReference type="ChEBI" id="CHEBI:29108"/>
        <label>1</label>
    </ligand>
</feature>
<feature type="binding site" evidence="3">
    <location>
        <position position="21"/>
    </location>
    <ligand>
        <name>Ca(2+)</name>
        <dbReference type="ChEBI" id="CHEBI:29108"/>
        <label>2</label>
    </ligand>
</feature>
<feature type="binding site" evidence="3">
    <location>
        <position position="24"/>
    </location>
    <ligand>
        <name>Ca(2+)</name>
        <dbReference type="ChEBI" id="CHEBI:29108"/>
        <label>2</label>
    </ligand>
</feature>
<feature type="binding site" evidence="3">
    <location>
        <position position="24"/>
    </location>
    <ligand>
        <name>Ca(2+)</name>
        <dbReference type="ChEBI" id="CHEBI:29108"/>
        <label>3</label>
    </ligand>
</feature>
<feature type="binding site" evidence="3">
    <location>
        <position position="30"/>
    </location>
    <ligand>
        <name>Ca(2+)</name>
        <dbReference type="ChEBI" id="CHEBI:29108"/>
        <label>3</label>
    </ligand>
</feature>
<feature type="modified residue" description="Pyrrolidone carboxylic acid" evidence="7">
    <location>
        <position position="1"/>
    </location>
</feature>
<feature type="modified residue" description="4-hydroxyproline" evidence="1">
    <location>
        <position position="9"/>
    </location>
</feature>
<feature type="modified residue" description="4-carboxyglutamate" evidence="2 6">
    <location>
        <position position="17"/>
    </location>
</feature>
<feature type="modified residue" description="4-carboxyglutamate" evidence="4 6">
    <location>
        <position position="21"/>
    </location>
</feature>
<feature type="modified residue" description="4-carboxyglutamate" evidence="4 6">
    <location>
        <position position="24"/>
    </location>
</feature>
<feature type="disulfide bond" evidence="6">
    <location>
        <begin position="23"/>
        <end position="29"/>
    </location>
</feature>
<proteinExistence type="evidence at protein level"/>
<evidence type="ECO:0000250" key="1"/>
<evidence type="ECO:0000250" key="2">
    <source>
        <dbReference type="UniProtKB" id="P02818"/>
    </source>
</evidence>
<evidence type="ECO:0000250" key="3">
    <source>
        <dbReference type="UniProtKB" id="P02820"/>
    </source>
</evidence>
<evidence type="ECO:0000250" key="4">
    <source>
        <dbReference type="UniProtKB" id="P83489"/>
    </source>
</evidence>
<evidence type="ECO:0000250" key="5">
    <source>
        <dbReference type="UniProtKB" id="P86546"/>
    </source>
</evidence>
<evidence type="ECO:0000255" key="6">
    <source>
        <dbReference type="PROSITE-ProRule" id="PRU00463"/>
    </source>
</evidence>
<evidence type="ECO:0000269" key="7">
    <source>
    </source>
</evidence>
<evidence type="ECO:0000305" key="8"/>
<gene>
    <name type="primary">BGLAP</name>
</gene>
<protein>
    <recommendedName>
        <fullName>Osteocalcin</fullName>
    </recommendedName>
    <alternativeName>
        <fullName>Bone Gla protein</fullName>
        <shortName>BGP</shortName>
    </alternativeName>
    <alternativeName>
        <fullName>Gamma-carboxyglutamic acid-containing protein</fullName>
    </alternativeName>
</protein>
<reference key="1">
    <citation type="journal article" date="1991" name="Biochem. Soc. Trans.">
        <title>Primary aminoacid sequence of rabbit osteocalcin.</title>
        <authorList>
            <person name="Virdi A.S."/>
            <person name="Willis A.C."/>
            <person name="Hauschka P.V."/>
            <person name="Triffitt J.T."/>
        </authorList>
    </citation>
    <scope>PROTEIN SEQUENCE</scope>
    <scope>PYROGLUTAMATE FORMATION AT GLN-1</scope>
</reference>